<feature type="signal peptide" evidence="1">
    <location>
        <begin position="1"/>
        <end position="20"/>
    </location>
</feature>
<feature type="chain" id="PRO_5004320188" description="Lipase lipl-1" evidence="1">
    <location>
        <begin position="21"/>
        <end position="405"/>
    </location>
</feature>
<feature type="active site" description="Nucleophile" evidence="3">
    <location>
        <position position="169"/>
    </location>
</feature>
<feature type="active site" description="Charge relay system" evidence="3">
    <location>
        <position position="344"/>
    </location>
</feature>
<feature type="active site" description="Charge relay system" evidence="3">
    <location>
        <position position="376"/>
    </location>
</feature>
<feature type="glycosylation site" description="N-linked (GlcNAc...) asparagine" evidence="4">
    <location>
        <position position="66"/>
    </location>
</feature>
<feature type="glycosylation site" description="N-linked (GlcNAc...) asparagine" evidence="4">
    <location>
        <position position="273"/>
    </location>
</feature>
<sequence>MRSWSTVMLAVLATAATVFGHDADPEMKMTTPQIIMRWGYPAMIYDVTTEDGYILELHRIPYGKTNVTWPNGKKPVVFMQHGLECSSSNWVVNLPTESAAFLFADAGYDVWLGNFRGNTYSMKHKNLKPSHSAFWDWSWDEMQQYDLPAMIEKALEVTGQDSLYYIGHSQGTLTMFSRLSEDKVGWGNKIKKFFALAPVGSVKHIKGALKFFADYFSLEFDGWFDVFGSGEFLPNNWIMKLVSESVCAGLKVEAGVCDDVMFLIAGPESNQLNATRVPIYVAHTPAGTSTQNIVHWIQMVRHGGTPKYDYGEKGNKKHYGQANVPAYDFTTVNRPVYLYWGDSDWLADPTDVTDFLLTHLNPSTVVQNNKLIDYNHLDFIWGLRAPKDIYEPIIDIVRNDVLNGS</sequence>
<dbReference type="EC" id="3.1.1.-" evidence="8"/>
<dbReference type="EMBL" id="BX284605">
    <property type="protein sequence ID" value="CAB01973.1"/>
    <property type="molecule type" value="Genomic_DNA"/>
</dbReference>
<dbReference type="PIR" id="T22675">
    <property type="entry name" value="T22675"/>
</dbReference>
<dbReference type="RefSeq" id="NP_506229.1">
    <property type="nucleotide sequence ID" value="NM_073828.5"/>
</dbReference>
<dbReference type="SMR" id="Q93789"/>
<dbReference type="FunCoup" id="Q93789">
    <property type="interactions" value="267"/>
</dbReference>
<dbReference type="STRING" id="6239.F54F3.3.1"/>
<dbReference type="ESTHER" id="caeel-F54F3.3">
    <property type="family name" value="Acidic_Lipase"/>
</dbReference>
<dbReference type="MEROPS" id="S33.B09"/>
<dbReference type="GlyCosmos" id="Q93789">
    <property type="glycosylation" value="2 sites, No reported glycans"/>
</dbReference>
<dbReference type="PaxDb" id="6239-F54F3.3"/>
<dbReference type="PeptideAtlas" id="Q93789"/>
<dbReference type="EnsemblMetazoa" id="F54F3.3.1">
    <property type="protein sequence ID" value="F54F3.3.1"/>
    <property type="gene ID" value="WBGene00010062"/>
</dbReference>
<dbReference type="GeneID" id="179771"/>
<dbReference type="KEGG" id="cel:CELE_F54F3.3"/>
<dbReference type="UCSC" id="F54F3.3">
    <property type="organism name" value="c. elegans"/>
</dbReference>
<dbReference type="AGR" id="WB:WBGene00010062"/>
<dbReference type="CTD" id="179771"/>
<dbReference type="WormBase" id="F54F3.3">
    <property type="protein sequence ID" value="CE18732"/>
    <property type="gene ID" value="WBGene00010062"/>
    <property type="gene designation" value="lipl-1"/>
</dbReference>
<dbReference type="eggNOG" id="KOG2624">
    <property type="taxonomic scope" value="Eukaryota"/>
</dbReference>
<dbReference type="GeneTree" id="ENSGT00940000169551"/>
<dbReference type="HOGENOM" id="CLU_010974_0_0_1"/>
<dbReference type="InParanoid" id="Q93789"/>
<dbReference type="OMA" id="GTMHQIG"/>
<dbReference type="OrthoDB" id="9974421at2759"/>
<dbReference type="PhylomeDB" id="Q93789"/>
<dbReference type="PRO" id="PR:Q93789"/>
<dbReference type="Proteomes" id="UP000001940">
    <property type="component" value="Chromosome V"/>
</dbReference>
<dbReference type="Bgee" id="WBGene00010062">
    <property type="expression patterns" value="Expressed in larva and 1 other cell type or tissue"/>
</dbReference>
<dbReference type="GO" id="GO:0005576">
    <property type="term" value="C:extracellular region"/>
    <property type="evidence" value="ECO:0007669"/>
    <property type="project" value="UniProtKB-SubCell"/>
</dbReference>
<dbReference type="GO" id="GO:0043202">
    <property type="term" value="C:lysosomal lumen"/>
    <property type="evidence" value="ECO:0007669"/>
    <property type="project" value="UniProtKB-SubCell"/>
</dbReference>
<dbReference type="GO" id="GO:0005764">
    <property type="term" value="C:lysosome"/>
    <property type="evidence" value="ECO:0000314"/>
    <property type="project" value="WormBase"/>
</dbReference>
<dbReference type="GO" id="GO:0016788">
    <property type="term" value="F:hydrolase activity, acting on ester bonds"/>
    <property type="evidence" value="ECO:0007669"/>
    <property type="project" value="InterPro"/>
</dbReference>
<dbReference type="GO" id="GO:0016042">
    <property type="term" value="P:lipid catabolic process"/>
    <property type="evidence" value="ECO:0000316"/>
    <property type="project" value="UniProtKB"/>
</dbReference>
<dbReference type="FunFam" id="3.40.50.1820:FF:000021">
    <property type="entry name" value="Lipase"/>
    <property type="match status" value="1"/>
</dbReference>
<dbReference type="Gene3D" id="3.40.50.1820">
    <property type="entry name" value="alpha/beta hydrolase"/>
    <property type="match status" value="1"/>
</dbReference>
<dbReference type="InterPro" id="IPR029058">
    <property type="entry name" value="AB_hydrolase_fold"/>
</dbReference>
<dbReference type="InterPro" id="IPR006693">
    <property type="entry name" value="AB_hydrolase_lipase"/>
</dbReference>
<dbReference type="InterPro" id="IPR025483">
    <property type="entry name" value="Lipase_euk"/>
</dbReference>
<dbReference type="PANTHER" id="PTHR11005">
    <property type="entry name" value="LYSOSOMAL ACID LIPASE-RELATED"/>
    <property type="match status" value="1"/>
</dbReference>
<dbReference type="Pfam" id="PF04083">
    <property type="entry name" value="Abhydro_lipase"/>
    <property type="match status" value="1"/>
</dbReference>
<dbReference type="PIRSF" id="PIRSF000862">
    <property type="entry name" value="Steryl_ester_lip"/>
    <property type="match status" value="1"/>
</dbReference>
<dbReference type="SUPFAM" id="SSF53474">
    <property type="entry name" value="alpha/beta-Hydrolases"/>
    <property type="match status" value="1"/>
</dbReference>
<dbReference type="PROSITE" id="PS00120">
    <property type="entry name" value="LIPASE_SER"/>
    <property type="match status" value="1"/>
</dbReference>
<evidence type="ECO:0000255" key="1"/>
<evidence type="ECO:0000255" key="2">
    <source>
        <dbReference type="PIRNR" id="PIRNR000862"/>
    </source>
</evidence>
<evidence type="ECO:0000255" key="3">
    <source>
        <dbReference type="PIRSR" id="PIRSR000862-1"/>
    </source>
</evidence>
<evidence type="ECO:0000255" key="4">
    <source>
        <dbReference type="PROSITE-ProRule" id="PRU00498"/>
    </source>
</evidence>
<evidence type="ECO:0000269" key="5">
    <source>
    </source>
</evidence>
<evidence type="ECO:0000269" key="6">
    <source>
    </source>
</evidence>
<evidence type="ECO:0000305" key="7"/>
<evidence type="ECO:0000305" key="8">
    <source>
    </source>
</evidence>
<evidence type="ECO:0000312" key="9">
    <source>
        <dbReference type="Proteomes" id="UP000001940"/>
    </source>
</evidence>
<evidence type="ECO:0000312" key="10">
    <source>
        <dbReference type="WormBase" id="F54F3.3"/>
    </source>
</evidence>
<gene>
    <name evidence="10" type="primary">lipl-1</name>
    <name evidence="10" type="ORF">F54F3.3</name>
</gene>
<reference evidence="9" key="1">
    <citation type="journal article" date="1998" name="Science">
        <title>Genome sequence of the nematode C. elegans: a platform for investigating biology.</title>
        <authorList>
            <consortium name="The C. elegans sequencing consortium"/>
        </authorList>
    </citation>
    <scope>NUCLEOTIDE SEQUENCE [LARGE SCALE GENOMIC DNA]</scope>
    <source>
        <strain evidence="9">Bristol N2</strain>
    </source>
</reference>
<reference evidence="7" key="2">
    <citation type="journal article" date="2013" name="Nat. Cell Biol.">
        <title>MXL-3 and HLH-30 transcriptionally link lipolysis and autophagy to nutrient availability.</title>
        <authorList>
            <person name="O'Rourke E.J."/>
            <person name="Ruvkun G."/>
        </authorList>
    </citation>
    <scope>FUNCTION</scope>
    <scope>BIOPHYSICOCHEMICAL PROPERTIES</scope>
    <scope>SUBCELLULAR LOCATION</scope>
    <scope>INDUCTION</scope>
</reference>
<reference evidence="7" key="3">
    <citation type="journal article" date="2017" name="Genes (Basel)">
        <title>The MXL-3/SBP-1 Axis Is Responsible for Glucose-Dependent Fat Accumulation in C. elegans.</title>
        <authorList>
            <person name="Mejia-Martinez F."/>
            <person name="Franco-Juarez B."/>
            <person name="Moreno-Arriola E."/>
            <person name="Hernandez-Vazquez A."/>
            <person name="Martinez-Avila M."/>
            <person name="Gomez-Manzo S."/>
            <person name="Marcial-Quino J."/>
            <person name="Carvajal K."/>
            <person name="Velazquez-Arellano A."/>
            <person name="Ortega-Cuellar D."/>
        </authorList>
    </citation>
    <scope>INDUCTION</scope>
</reference>
<keyword id="KW-0325">Glycoprotein</keyword>
<keyword id="KW-0378">Hydrolase</keyword>
<keyword id="KW-0442">Lipid degradation</keyword>
<keyword id="KW-0443">Lipid metabolism</keyword>
<keyword id="KW-0458">Lysosome</keyword>
<keyword id="KW-1185">Reference proteome</keyword>
<keyword id="KW-0964">Secreted</keyword>
<keyword id="KW-0732">Signal</keyword>
<protein>
    <recommendedName>
        <fullName evidence="2">Lipase lipl-1</fullName>
        <ecNumber evidence="8">3.1.1.-</ecNumber>
    </recommendedName>
    <alternativeName>
        <fullName evidence="10">Lipase-like 1</fullName>
    </alternativeName>
</protein>
<proteinExistence type="evidence at transcript level"/>
<organism evidence="9">
    <name type="scientific">Caenorhabditis elegans</name>
    <dbReference type="NCBI Taxonomy" id="6239"/>
    <lineage>
        <taxon>Eukaryota</taxon>
        <taxon>Metazoa</taxon>
        <taxon>Ecdysozoa</taxon>
        <taxon>Nematoda</taxon>
        <taxon>Chromadorea</taxon>
        <taxon>Rhabditida</taxon>
        <taxon>Rhabditina</taxon>
        <taxon>Rhabditomorpha</taxon>
        <taxon>Rhabditoidea</taxon>
        <taxon>Rhabditidae</taxon>
        <taxon>Peloderinae</taxon>
        <taxon>Caenorhabditis</taxon>
    </lineage>
</organism>
<name>LIPL1_CAEEL</name>
<comment type="function">
    <text evidence="5">Lipase that, together with lipl-3, plays a role in the response to nutrient deprivation by controlling lipid metabolism (PubMed:23604316). Specifically, involved in the breakdown of lipids during lipophagy, a process during which lipids contained in lipid droplets that have been delivered to lysosomes by autophagy are degraded (PubMed:23604316).</text>
</comment>
<comment type="biophysicochemical properties">
    <phDependence>
        <text evidence="8">Optimum pH is acidic.</text>
    </phDependence>
</comment>
<comment type="subcellular location">
    <subcellularLocation>
        <location evidence="5">Secreted</location>
    </subcellularLocation>
    <subcellularLocation>
        <location evidence="5">Lysosome lumen</location>
    </subcellularLocation>
    <text evidence="5">Secreted into the intestinal lumen.</text>
</comment>
<comment type="induction">
    <text evidence="5 6">Up-regulated in the intestine by fasting (PubMed:23604316). Down-regulated in response to a high-glucose diet (PubMed:29113111).</text>
</comment>
<comment type="similarity">
    <text evidence="2">Belongs to the AB hydrolase superfamily. Lipase family.</text>
</comment>
<accession>Q93789</accession>